<sequence length="218" mass="23885">MKTEIQEIVTRLDQQSNKGEGGESMKWLFRPLLQMLAGGESVTIEDMATTTGKPVEEVKKVLQSLPSVEIDEQGRVVGLGLTLIPTPHHFTVDGKQLYAWCALDTLIFPALIGRSVNIESPCHSTGEPIRLNVEPDHIVSVEPSTAVVSIVTPDDMSSIRTAFCNEVHFFSSPNAAEDWLDQHPGGKVLSVEDAFELGRLMGTRYEESRPANGSCCHI</sequence>
<accession>P62224</accession>
<gene>
    <name evidence="1" type="primary">merB</name>
</gene>
<organism>
    <name type="scientific">Clostridium butyricum</name>
    <dbReference type="NCBI Taxonomy" id="1492"/>
    <lineage>
        <taxon>Bacteria</taxon>
        <taxon>Bacillati</taxon>
        <taxon>Bacillota</taxon>
        <taxon>Clostridia</taxon>
        <taxon>Eubacteriales</taxon>
        <taxon>Clostridiaceae</taxon>
        <taxon>Clostridium</taxon>
    </lineage>
</organism>
<name>MERB_CLOBU</name>
<feature type="chain" id="PRO_0000220355" description="Alkylmercury lyase">
    <location>
        <begin position="1"/>
        <end position="218"/>
    </location>
</feature>
<comment type="function">
    <text evidence="1">Cleaves the carbon-mercury bond of organomercurials such as phenylmercuric acetate. One product is Hg(2+), which is subsequently detoxified by the mercuric reductase.</text>
</comment>
<comment type="catalytic activity">
    <reaction evidence="1">
        <text>an alkylmercury + H(+) = an alkane + Hg(2+)</text>
        <dbReference type="Rhea" id="RHEA:18777"/>
        <dbReference type="ChEBI" id="CHEBI:15378"/>
        <dbReference type="ChEBI" id="CHEBI:16793"/>
        <dbReference type="ChEBI" id="CHEBI:18310"/>
        <dbReference type="ChEBI" id="CHEBI:83725"/>
        <dbReference type="EC" id="4.99.1.2"/>
    </reaction>
</comment>
<comment type="similarity">
    <text evidence="1">Belongs to the MerB family.</text>
</comment>
<reference key="1">
    <citation type="submission" date="1999-03" db="EMBL/GenBank/DDBJ databases">
        <title>Broad-spectrum mercury resistance and its genetic characterization of anaerobic mercury-resistant bacterium, Clostridium butyricum Mersaru, isolated from sediment of Minamata bay, Japan.</title>
        <authorList>
            <person name="Narita M."/>
            <person name="Koizumi T."/>
            <person name="Huang C."/>
            <person name="Endo G."/>
        </authorList>
    </citation>
    <scope>NUCLEOTIDE SEQUENCE [GENOMIC DNA]</scope>
    <source>
        <strain>Mersaru</strain>
    </source>
</reference>
<proteinExistence type="inferred from homology"/>
<protein>
    <recommendedName>
        <fullName evidence="1">Alkylmercury lyase</fullName>
        <ecNumber evidence="1">4.99.1.2</ecNumber>
    </recommendedName>
    <alternativeName>
        <fullName evidence="1">Organomercurial lyase</fullName>
    </alternativeName>
</protein>
<dbReference type="EC" id="4.99.1.2" evidence="1"/>
<dbReference type="EMBL" id="AB024961">
    <property type="protein sequence ID" value="BAA86120.1"/>
    <property type="molecule type" value="Genomic_DNA"/>
</dbReference>
<dbReference type="SMR" id="P62224"/>
<dbReference type="GO" id="GO:0018836">
    <property type="term" value="F:alkylmercury lyase activity"/>
    <property type="evidence" value="ECO:0007669"/>
    <property type="project" value="UniProtKB-UniRule"/>
</dbReference>
<dbReference type="GO" id="GO:0046689">
    <property type="term" value="P:response to mercury ion"/>
    <property type="evidence" value="ECO:0007669"/>
    <property type="project" value="UniProtKB-UniRule"/>
</dbReference>
<dbReference type="Gene3D" id="3.30.450.410">
    <property type="match status" value="1"/>
</dbReference>
<dbReference type="HAMAP" id="MF_00714">
    <property type="entry name" value="MerB"/>
    <property type="match status" value="1"/>
</dbReference>
<dbReference type="InterPro" id="IPR004927">
    <property type="entry name" value="MerB"/>
</dbReference>
<dbReference type="InterPro" id="IPR024259">
    <property type="entry name" value="MerB_HTH_dom"/>
</dbReference>
<dbReference type="InterPro" id="IPR053717">
    <property type="entry name" value="MerB_lyase_sf"/>
</dbReference>
<dbReference type="InterPro" id="IPR036390">
    <property type="entry name" value="WH_DNA-bd_sf"/>
</dbReference>
<dbReference type="NCBIfam" id="NF033555">
    <property type="entry name" value="lyase_MerB"/>
    <property type="match status" value="1"/>
</dbReference>
<dbReference type="NCBIfam" id="NF009710">
    <property type="entry name" value="PRK13239.1"/>
    <property type="match status" value="1"/>
</dbReference>
<dbReference type="Pfam" id="PF12324">
    <property type="entry name" value="HTH_15"/>
    <property type="match status" value="1"/>
</dbReference>
<dbReference type="Pfam" id="PF03243">
    <property type="entry name" value="MerB"/>
    <property type="match status" value="1"/>
</dbReference>
<dbReference type="PIRSF" id="PIRSF001458">
    <property type="entry name" value="MerB"/>
    <property type="match status" value="1"/>
</dbReference>
<dbReference type="PRINTS" id="PR01699">
    <property type="entry name" value="ORGNOHGLYASE"/>
</dbReference>
<dbReference type="SUPFAM" id="SSF160387">
    <property type="entry name" value="NosL/MerB-like"/>
    <property type="match status" value="1"/>
</dbReference>
<dbReference type="SUPFAM" id="SSF46785">
    <property type="entry name" value="Winged helix' DNA-binding domain"/>
    <property type="match status" value="1"/>
</dbReference>
<keyword id="KW-0456">Lyase</keyword>
<keyword id="KW-0475">Mercuric resistance</keyword>
<keyword id="KW-0476">Mercury</keyword>
<evidence type="ECO:0000255" key="1">
    <source>
        <dbReference type="HAMAP-Rule" id="MF_00714"/>
    </source>
</evidence>